<sequence length="282" mass="30890">MSIKTIQLGDIAIANDKPFVLFGGMNVLESRDLAMSIAEKYLEVTQKLGIPYVFKASFDKANRSSINSYRGPGMEEGLKIFQEIKDTFNVPLITDVHEPHQCAPVAEVVDIIQLPAFLARQTDLVIAMARTGAIINVKKPQFLAPHEMRHIVKKFNEAGNDEIILCERGSCFGYNNLVVDMLGMDEMKQSGYPVIFDATHALQRPGGREDSAGGRRAQATELARSGMALGLAGLFIEAHPDPDNAKCDGPCALPLHQLEAYLSQMKAVDDLVKSFPALDTSK</sequence>
<dbReference type="EC" id="2.5.1.55" evidence="1"/>
<dbReference type="EMBL" id="CP000507">
    <property type="protein sequence ID" value="ABM00764.1"/>
    <property type="molecule type" value="Genomic_DNA"/>
</dbReference>
<dbReference type="RefSeq" id="WP_011760670.1">
    <property type="nucleotide sequence ID" value="NC_008700.1"/>
</dbReference>
<dbReference type="SMR" id="A1S8Q7"/>
<dbReference type="STRING" id="326297.Sama_2561"/>
<dbReference type="KEGG" id="saz:Sama_2561"/>
<dbReference type="eggNOG" id="COG2877">
    <property type="taxonomic scope" value="Bacteria"/>
</dbReference>
<dbReference type="HOGENOM" id="CLU_036666_0_0_6"/>
<dbReference type="OrthoDB" id="9776934at2"/>
<dbReference type="UniPathway" id="UPA00030"/>
<dbReference type="UniPathway" id="UPA00357">
    <property type="reaction ID" value="UER00474"/>
</dbReference>
<dbReference type="Proteomes" id="UP000009175">
    <property type="component" value="Chromosome"/>
</dbReference>
<dbReference type="GO" id="GO:0005737">
    <property type="term" value="C:cytoplasm"/>
    <property type="evidence" value="ECO:0007669"/>
    <property type="project" value="UniProtKB-SubCell"/>
</dbReference>
<dbReference type="GO" id="GO:0008676">
    <property type="term" value="F:3-deoxy-8-phosphooctulonate synthase activity"/>
    <property type="evidence" value="ECO:0007669"/>
    <property type="project" value="UniProtKB-UniRule"/>
</dbReference>
<dbReference type="GO" id="GO:0019294">
    <property type="term" value="P:keto-3-deoxy-D-manno-octulosonic acid biosynthetic process"/>
    <property type="evidence" value="ECO:0007669"/>
    <property type="project" value="UniProtKB-UniRule"/>
</dbReference>
<dbReference type="Gene3D" id="3.20.20.70">
    <property type="entry name" value="Aldolase class I"/>
    <property type="match status" value="1"/>
</dbReference>
<dbReference type="HAMAP" id="MF_00056">
    <property type="entry name" value="KDO8P_synth"/>
    <property type="match status" value="1"/>
</dbReference>
<dbReference type="InterPro" id="IPR013785">
    <property type="entry name" value="Aldolase_TIM"/>
</dbReference>
<dbReference type="InterPro" id="IPR006218">
    <property type="entry name" value="DAHP1/KDSA"/>
</dbReference>
<dbReference type="InterPro" id="IPR006269">
    <property type="entry name" value="KDO8P_synthase"/>
</dbReference>
<dbReference type="NCBIfam" id="TIGR01362">
    <property type="entry name" value="KDO8P_synth"/>
    <property type="match status" value="1"/>
</dbReference>
<dbReference type="NCBIfam" id="NF003543">
    <property type="entry name" value="PRK05198.1"/>
    <property type="match status" value="1"/>
</dbReference>
<dbReference type="NCBIfam" id="NF009109">
    <property type="entry name" value="PRK12457.1"/>
    <property type="match status" value="1"/>
</dbReference>
<dbReference type="PANTHER" id="PTHR21057">
    <property type="entry name" value="PHOSPHO-2-DEHYDRO-3-DEOXYHEPTONATE ALDOLASE"/>
    <property type="match status" value="1"/>
</dbReference>
<dbReference type="Pfam" id="PF00793">
    <property type="entry name" value="DAHP_synth_1"/>
    <property type="match status" value="1"/>
</dbReference>
<dbReference type="SUPFAM" id="SSF51569">
    <property type="entry name" value="Aldolase"/>
    <property type="match status" value="1"/>
</dbReference>
<reference key="1">
    <citation type="submission" date="2006-12" db="EMBL/GenBank/DDBJ databases">
        <title>Complete sequence of Shewanella amazonensis SB2B.</title>
        <authorList>
            <consortium name="US DOE Joint Genome Institute"/>
            <person name="Copeland A."/>
            <person name="Lucas S."/>
            <person name="Lapidus A."/>
            <person name="Barry K."/>
            <person name="Detter J.C."/>
            <person name="Glavina del Rio T."/>
            <person name="Hammon N."/>
            <person name="Israni S."/>
            <person name="Dalin E."/>
            <person name="Tice H."/>
            <person name="Pitluck S."/>
            <person name="Munk A.C."/>
            <person name="Brettin T."/>
            <person name="Bruce D."/>
            <person name="Han C."/>
            <person name="Tapia R."/>
            <person name="Gilna P."/>
            <person name="Schmutz J."/>
            <person name="Larimer F."/>
            <person name="Land M."/>
            <person name="Hauser L."/>
            <person name="Kyrpides N."/>
            <person name="Mikhailova N."/>
            <person name="Fredrickson J."/>
            <person name="Richardson P."/>
        </authorList>
    </citation>
    <scope>NUCLEOTIDE SEQUENCE [LARGE SCALE GENOMIC DNA]</scope>
    <source>
        <strain>ATCC BAA-1098 / SB2B</strain>
    </source>
</reference>
<feature type="chain" id="PRO_0000304483" description="2-dehydro-3-deoxyphosphooctonate aldolase">
    <location>
        <begin position="1"/>
        <end position="282"/>
    </location>
</feature>
<gene>
    <name evidence="1" type="primary">kdsA</name>
    <name type="ordered locus">Sama_2561</name>
</gene>
<keyword id="KW-0963">Cytoplasm</keyword>
<keyword id="KW-0448">Lipopolysaccharide biosynthesis</keyword>
<keyword id="KW-1185">Reference proteome</keyword>
<keyword id="KW-0808">Transferase</keyword>
<organism>
    <name type="scientific">Shewanella amazonensis (strain ATCC BAA-1098 / SB2B)</name>
    <dbReference type="NCBI Taxonomy" id="326297"/>
    <lineage>
        <taxon>Bacteria</taxon>
        <taxon>Pseudomonadati</taxon>
        <taxon>Pseudomonadota</taxon>
        <taxon>Gammaproteobacteria</taxon>
        <taxon>Alteromonadales</taxon>
        <taxon>Shewanellaceae</taxon>
        <taxon>Shewanella</taxon>
    </lineage>
</organism>
<protein>
    <recommendedName>
        <fullName evidence="1">2-dehydro-3-deoxyphosphooctonate aldolase</fullName>
        <ecNumber evidence="1">2.5.1.55</ecNumber>
    </recommendedName>
    <alternativeName>
        <fullName evidence="1">3-deoxy-D-manno-octulosonic acid 8-phosphate synthase</fullName>
    </alternativeName>
    <alternativeName>
        <fullName evidence="1">KDO-8-phosphate synthase</fullName>
        <shortName evidence="1">KDO 8-P synthase</shortName>
        <shortName evidence="1">KDOPS</shortName>
    </alternativeName>
    <alternativeName>
        <fullName evidence="1">Phospho-2-dehydro-3-deoxyoctonate aldolase</fullName>
    </alternativeName>
</protein>
<comment type="catalytic activity">
    <reaction evidence="1">
        <text>D-arabinose 5-phosphate + phosphoenolpyruvate + H2O = 3-deoxy-alpha-D-manno-2-octulosonate-8-phosphate + phosphate</text>
        <dbReference type="Rhea" id="RHEA:14053"/>
        <dbReference type="ChEBI" id="CHEBI:15377"/>
        <dbReference type="ChEBI" id="CHEBI:43474"/>
        <dbReference type="ChEBI" id="CHEBI:57693"/>
        <dbReference type="ChEBI" id="CHEBI:58702"/>
        <dbReference type="ChEBI" id="CHEBI:85985"/>
        <dbReference type="EC" id="2.5.1.55"/>
    </reaction>
</comment>
<comment type="pathway">
    <text evidence="1">Carbohydrate biosynthesis; 3-deoxy-D-manno-octulosonate biosynthesis; 3-deoxy-D-manno-octulosonate from D-ribulose 5-phosphate: step 2/3.</text>
</comment>
<comment type="pathway">
    <text evidence="1">Bacterial outer membrane biogenesis; lipopolysaccharide biosynthesis.</text>
</comment>
<comment type="subcellular location">
    <subcellularLocation>
        <location evidence="1">Cytoplasm</location>
    </subcellularLocation>
</comment>
<comment type="similarity">
    <text evidence="1">Belongs to the KdsA family.</text>
</comment>
<proteinExistence type="inferred from homology"/>
<accession>A1S8Q7</accession>
<name>KDSA_SHEAM</name>
<evidence type="ECO:0000255" key="1">
    <source>
        <dbReference type="HAMAP-Rule" id="MF_00056"/>
    </source>
</evidence>